<organism>
    <name type="scientific">Homo sapiens</name>
    <name type="common">Human</name>
    <dbReference type="NCBI Taxonomy" id="9606"/>
    <lineage>
        <taxon>Eukaryota</taxon>
        <taxon>Metazoa</taxon>
        <taxon>Chordata</taxon>
        <taxon>Craniata</taxon>
        <taxon>Vertebrata</taxon>
        <taxon>Euteleostomi</taxon>
        <taxon>Mammalia</taxon>
        <taxon>Eutheria</taxon>
        <taxon>Euarchontoglires</taxon>
        <taxon>Primates</taxon>
        <taxon>Haplorrhini</taxon>
        <taxon>Catarrhini</taxon>
        <taxon>Hominidae</taxon>
        <taxon>Homo</taxon>
    </lineage>
</organism>
<accession>O43312</accession>
<accession>J3KNK6</accession>
<accession>Q8TCA2</accession>
<accession>Q96RX2</accession>
<dbReference type="EMBL" id="AF086645">
    <property type="protein sequence ID" value="AAF15947.1"/>
    <property type="molecule type" value="mRNA"/>
</dbReference>
<dbReference type="EMBL" id="AK027015">
    <property type="status" value="NOT_ANNOTATED_CDS"/>
    <property type="molecule type" value="mRNA"/>
</dbReference>
<dbReference type="EMBL" id="AC090198">
    <property type="status" value="NOT_ANNOTATED_CDS"/>
    <property type="molecule type" value="Genomic_DNA"/>
</dbReference>
<dbReference type="EMBL" id="AC090922">
    <property type="status" value="NOT_ANNOTATED_CDS"/>
    <property type="molecule type" value="Genomic_DNA"/>
</dbReference>
<dbReference type="EMBL" id="BC023998">
    <property type="protein sequence ID" value="AAH23998.1"/>
    <property type="molecule type" value="mRNA"/>
</dbReference>
<dbReference type="EMBL" id="AB007889">
    <property type="protein sequence ID" value="BAA24859.3"/>
    <property type="molecule type" value="mRNA"/>
</dbReference>
<dbReference type="CCDS" id="CCDS6353.1">
    <molecule id="O43312-1"/>
</dbReference>
<dbReference type="CCDS" id="CCDS64968.1">
    <molecule id="O43312-4"/>
</dbReference>
<dbReference type="CCDS" id="CCDS64969.1">
    <molecule id="O43312-5"/>
</dbReference>
<dbReference type="RefSeq" id="NP_001269900.1">
    <molecule id="O43312-5"/>
    <property type="nucleotide sequence ID" value="NM_001282971.2"/>
</dbReference>
<dbReference type="RefSeq" id="NP_001269903.1">
    <molecule id="O43312-4"/>
    <property type="nucleotide sequence ID" value="NM_001282974.2"/>
</dbReference>
<dbReference type="RefSeq" id="NP_055566.3">
    <molecule id="O43312-1"/>
    <property type="nucleotide sequence ID" value="NM_014751.5"/>
</dbReference>
<dbReference type="PDB" id="2D1K">
    <property type="method" value="X-ray"/>
    <property type="resolution" value="2.50 A"/>
    <property type="chains" value="C=724-755"/>
</dbReference>
<dbReference type="PDBsum" id="2D1K"/>
<dbReference type="SMR" id="O43312"/>
<dbReference type="BioGRID" id="115132">
    <property type="interactions" value="29"/>
</dbReference>
<dbReference type="DIP" id="DIP-17022N"/>
<dbReference type="ELM" id="O43312"/>
<dbReference type="FunCoup" id="O43312">
    <property type="interactions" value="437"/>
</dbReference>
<dbReference type="IntAct" id="O43312">
    <property type="interactions" value="8"/>
</dbReference>
<dbReference type="MINT" id="O43312"/>
<dbReference type="STRING" id="9606.ENSP00000322804"/>
<dbReference type="GlyGen" id="O43312">
    <property type="glycosylation" value="9 sites, 1 O-linked glycan (6 sites)"/>
</dbReference>
<dbReference type="iPTMnet" id="O43312"/>
<dbReference type="PhosphoSitePlus" id="O43312"/>
<dbReference type="BioMuta" id="MTSS1"/>
<dbReference type="jPOST" id="O43312"/>
<dbReference type="MassIVE" id="O43312"/>
<dbReference type="PaxDb" id="9606-ENSP00000322804"/>
<dbReference type="PeptideAtlas" id="O43312"/>
<dbReference type="ProteomicsDB" id="48887">
    <molecule id="O43312-1"/>
</dbReference>
<dbReference type="ProteomicsDB" id="48888">
    <molecule id="O43312-2"/>
</dbReference>
<dbReference type="ProteomicsDB" id="48889">
    <molecule id="O43312-4"/>
</dbReference>
<dbReference type="Antibodypedia" id="27094">
    <property type="antibodies" value="219 antibodies from 30 providers"/>
</dbReference>
<dbReference type="DNASU" id="9788"/>
<dbReference type="Ensembl" id="ENST00000325064.9">
    <molecule id="O43312-5"/>
    <property type="protein sequence ID" value="ENSP00000322804.5"/>
    <property type="gene ID" value="ENSG00000170873.19"/>
</dbReference>
<dbReference type="Ensembl" id="ENST00000378017.7">
    <molecule id="O43312-4"/>
    <property type="protein sequence ID" value="ENSP00000367256.3"/>
    <property type="gene ID" value="ENSG00000170873.19"/>
</dbReference>
<dbReference type="Ensembl" id="ENST00000431961.6">
    <molecule id="O43312-2"/>
    <property type="protein sequence ID" value="ENSP00000393606.2"/>
    <property type="gene ID" value="ENSG00000170873.19"/>
</dbReference>
<dbReference type="Ensembl" id="ENST00000518547.6">
    <molecule id="O43312-1"/>
    <property type="protein sequence ID" value="ENSP00000429064.1"/>
    <property type="gene ID" value="ENSG00000170873.19"/>
</dbReference>
<dbReference type="GeneID" id="9788"/>
<dbReference type="KEGG" id="hsa:9788"/>
<dbReference type="MANE-Select" id="ENST00000518547.6">
    <property type="protein sequence ID" value="ENSP00000429064.1"/>
    <property type="RefSeq nucleotide sequence ID" value="NM_014751.6"/>
    <property type="RefSeq protein sequence ID" value="NP_055566.3"/>
</dbReference>
<dbReference type="UCSC" id="uc003yri.4">
    <molecule id="O43312-1"/>
    <property type="organism name" value="human"/>
</dbReference>
<dbReference type="AGR" id="HGNC:20443"/>
<dbReference type="CTD" id="9788"/>
<dbReference type="DisGeNET" id="9788"/>
<dbReference type="GeneCards" id="MTSS1"/>
<dbReference type="HGNC" id="HGNC:20443">
    <property type="gene designation" value="MTSS1"/>
</dbReference>
<dbReference type="HPA" id="ENSG00000170873">
    <property type="expression patterns" value="Low tissue specificity"/>
</dbReference>
<dbReference type="MIM" id="608486">
    <property type="type" value="gene"/>
</dbReference>
<dbReference type="neXtProt" id="NX_O43312"/>
<dbReference type="OpenTargets" id="ENSG00000170873"/>
<dbReference type="PharmGKB" id="PA134892011"/>
<dbReference type="VEuPathDB" id="HostDB:ENSG00000170873"/>
<dbReference type="eggNOG" id="ENOG502QRG4">
    <property type="taxonomic scope" value="Eukaryota"/>
</dbReference>
<dbReference type="GeneTree" id="ENSGT00950000183156"/>
<dbReference type="HOGENOM" id="CLU_004805_2_0_1"/>
<dbReference type="InParanoid" id="O43312"/>
<dbReference type="OMA" id="QKKAKKX"/>
<dbReference type="OrthoDB" id="10061327at2759"/>
<dbReference type="PAN-GO" id="O43312">
    <property type="GO annotations" value="6 GO annotations based on evolutionary models"/>
</dbReference>
<dbReference type="PhylomeDB" id="O43312"/>
<dbReference type="TreeFam" id="TF320619"/>
<dbReference type="PathwayCommons" id="O43312"/>
<dbReference type="SignaLink" id="O43312"/>
<dbReference type="SIGNOR" id="O43312"/>
<dbReference type="BioGRID-ORCS" id="9788">
    <property type="hits" value="17 hits in 1150 CRISPR screens"/>
</dbReference>
<dbReference type="ChiTaRS" id="MTSS1">
    <property type="organism name" value="human"/>
</dbReference>
<dbReference type="EvolutionaryTrace" id="O43312"/>
<dbReference type="GeneWiki" id="MTSS1"/>
<dbReference type="GenomeRNAi" id="9788"/>
<dbReference type="Pharos" id="O43312">
    <property type="development level" value="Tbio"/>
</dbReference>
<dbReference type="PRO" id="PR:O43312"/>
<dbReference type="Proteomes" id="UP000005640">
    <property type="component" value="Chromosome 8"/>
</dbReference>
<dbReference type="RNAct" id="O43312">
    <property type="molecule type" value="protein"/>
</dbReference>
<dbReference type="Bgee" id="ENSG00000170873">
    <property type="expression patterns" value="Expressed in pigmented layer of retina and 211 other cell types or tissues"/>
</dbReference>
<dbReference type="ExpressionAtlas" id="O43312">
    <property type="expression patterns" value="baseline and differential"/>
</dbReference>
<dbReference type="GO" id="GO:0015629">
    <property type="term" value="C:actin cytoskeleton"/>
    <property type="evidence" value="ECO:0000314"/>
    <property type="project" value="UniProtKB"/>
</dbReference>
<dbReference type="GO" id="GO:0005737">
    <property type="term" value="C:cytoplasm"/>
    <property type="evidence" value="ECO:0000304"/>
    <property type="project" value="UniProtKB"/>
</dbReference>
<dbReference type="GO" id="GO:0009898">
    <property type="term" value="C:cytoplasmic side of plasma membrane"/>
    <property type="evidence" value="ECO:0000318"/>
    <property type="project" value="GO_Central"/>
</dbReference>
<dbReference type="GO" id="GO:0030139">
    <property type="term" value="C:endocytic vesicle"/>
    <property type="evidence" value="ECO:0000304"/>
    <property type="project" value="UniProtKB"/>
</dbReference>
<dbReference type="GO" id="GO:0001726">
    <property type="term" value="C:ruffle"/>
    <property type="evidence" value="ECO:0000303"/>
    <property type="project" value="UniProtKB"/>
</dbReference>
<dbReference type="GO" id="GO:0003779">
    <property type="term" value="F:actin binding"/>
    <property type="evidence" value="ECO:0000318"/>
    <property type="project" value="GO_Central"/>
</dbReference>
<dbReference type="GO" id="GO:0003785">
    <property type="term" value="F:actin monomer binding"/>
    <property type="evidence" value="ECO:0000314"/>
    <property type="project" value="UniProtKB"/>
</dbReference>
<dbReference type="GO" id="GO:0042802">
    <property type="term" value="F:identical protein binding"/>
    <property type="evidence" value="ECO:0000353"/>
    <property type="project" value="IntAct"/>
</dbReference>
<dbReference type="GO" id="GO:0005543">
    <property type="term" value="F:phospholipid binding"/>
    <property type="evidence" value="ECO:0000318"/>
    <property type="project" value="GO_Central"/>
</dbReference>
<dbReference type="GO" id="GO:0005102">
    <property type="term" value="F:signaling receptor binding"/>
    <property type="evidence" value="ECO:0000353"/>
    <property type="project" value="UniProtKB"/>
</dbReference>
<dbReference type="GO" id="GO:0030036">
    <property type="term" value="P:actin cytoskeleton organization"/>
    <property type="evidence" value="ECO:0000304"/>
    <property type="project" value="UniProtKB"/>
</dbReference>
<dbReference type="GO" id="GO:0034334">
    <property type="term" value="P:adherens junction maintenance"/>
    <property type="evidence" value="ECO:0000318"/>
    <property type="project" value="GO_Central"/>
</dbReference>
<dbReference type="GO" id="GO:0007155">
    <property type="term" value="P:cell adhesion"/>
    <property type="evidence" value="ECO:0000303"/>
    <property type="project" value="UniProtKB"/>
</dbReference>
<dbReference type="GO" id="GO:0007169">
    <property type="term" value="P:cell surface receptor protein tyrosine kinase signaling pathway"/>
    <property type="evidence" value="ECO:0000304"/>
    <property type="project" value="UniProtKB"/>
</dbReference>
<dbReference type="GO" id="GO:0071498">
    <property type="term" value="P:cellular response to fluid shear stress"/>
    <property type="evidence" value="ECO:0000250"/>
    <property type="project" value="UniProtKB"/>
</dbReference>
<dbReference type="GO" id="GO:2001013">
    <property type="term" value="P:epithelial cell proliferation involved in renal tubule morphogenesis"/>
    <property type="evidence" value="ECO:0000250"/>
    <property type="project" value="UniProtKB"/>
</dbReference>
<dbReference type="GO" id="GO:0072102">
    <property type="term" value="P:glomerulus morphogenesis"/>
    <property type="evidence" value="ECO:0000250"/>
    <property type="project" value="UniProtKB"/>
</dbReference>
<dbReference type="GO" id="GO:0030035">
    <property type="term" value="P:microspike assembly"/>
    <property type="evidence" value="ECO:0000303"/>
    <property type="project" value="UniProtKB"/>
</dbReference>
<dbReference type="GO" id="GO:0050680">
    <property type="term" value="P:negative regulation of epithelial cell proliferation"/>
    <property type="evidence" value="ECO:0000250"/>
    <property type="project" value="UniProtKB"/>
</dbReference>
<dbReference type="GO" id="GO:0072160">
    <property type="term" value="P:nephron tubule epithelial cell differentiation"/>
    <property type="evidence" value="ECO:0000250"/>
    <property type="project" value="UniProtKB"/>
</dbReference>
<dbReference type="GO" id="GO:0007009">
    <property type="term" value="P:plasma membrane organization"/>
    <property type="evidence" value="ECO:0007669"/>
    <property type="project" value="InterPro"/>
</dbReference>
<dbReference type="GO" id="GO:0032233">
    <property type="term" value="P:positive regulation of actin filament bundle assembly"/>
    <property type="evidence" value="ECO:0000318"/>
    <property type="project" value="GO_Central"/>
</dbReference>
<dbReference type="GO" id="GO:0061333">
    <property type="term" value="P:renal tubule morphogenesis"/>
    <property type="evidence" value="ECO:0000250"/>
    <property type="project" value="UniProtKB"/>
</dbReference>
<dbReference type="CDD" id="cd07643">
    <property type="entry name" value="I-BAR_IMD_MIM"/>
    <property type="match status" value="1"/>
</dbReference>
<dbReference type="CDD" id="cd22060">
    <property type="entry name" value="WH2_MTSS1"/>
    <property type="match status" value="1"/>
</dbReference>
<dbReference type="DisProt" id="DP01224"/>
<dbReference type="FunFam" id="1.20.1270.60:FF:000010">
    <property type="entry name" value="Metastasis suppressor 1, isoform CRA_e"/>
    <property type="match status" value="1"/>
</dbReference>
<dbReference type="Gene3D" id="1.20.1270.60">
    <property type="entry name" value="Arfaptin homology (AH) domain/BAR domain"/>
    <property type="match status" value="1"/>
</dbReference>
<dbReference type="IDEAL" id="IID00257"/>
<dbReference type="InterPro" id="IPR027267">
    <property type="entry name" value="AH/BAR_dom_sf"/>
</dbReference>
<dbReference type="InterPro" id="IPR013606">
    <property type="entry name" value="I-BAR_dom"/>
</dbReference>
<dbReference type="InterPro" id="IPR030127">
    <property type="entry name" value="MTSS1/MTSS2"/>
</dbReference>
<dbReference type="InterPro" id="IPR003124">
    <property type="entry name" value="WH2_dom"/>
</dbReference>
<dbReference type="PANTHER" id="PTHR15708">
    <property type="entry name" value="ACTIN BUNDLING/MISSING IN METASTASIS-RELATED"/>
    <property type="match status" value="1"/>
</dbReference>
<dbReference type="PANTHER" id="PTHR15708:SF10">
    <property type="entry name" value="PROTEIN MTSS 1"/>
    <property type="match status" value="1"/>
</dbReference>
<dbReference type="Pfam" id="PF08397">
    <property type="entry name" value="IMD"/>
    <property type="match status" value="1"/>
</dbReference>
<dbReference type="Pfam" id="PF02205">
    <property type="entry name" value="WH2"/>
    <property type="match status" value="1"/>
</dbReference>
<dbReference type="SUPFAM" id="SSF103657">
    <property type="entry name" value="BAR/IMD domain-like"/>
    <property type="match status" value="1"/>
</dbReference>
<dbReference type="PROSITE" id="PS51338">
    <property type="entry name" value="IMD"/>
    <property type="match status" value="1"/>
</dbReference>
<dbReference type="PROSITE" id="PS51082">
    <property type="entry name" value="WH2"/>
    <property type="match status" value="1"/>
</dbReference>
<keyword id="KW-0002">3D-structure</keyword>
<keyword id="KW-0009">Actin-binding</keyword>
<keyword id="KW-0025">Alternative splicing</keyword>
<keyword id="KW-0175">Coiled coil</keyword>
<keyword id="KW-0963">Cytoplasm</keyword>
<keyword id="KW-0206">Cytoskeleton</keyword>
<keyword id="KW-0597">Phosphoprotein</keyword>
<keyword id="KW-1267">Proteomics identification</keyword>
<keyword id="KW-1185">Reference proteome</keyword>
<keyword id="KW-0043">Tumor suppressor</keyword>
<name>MTSS1_HUMAN</name>
<feature type="chain" id="PRO_0000096639" description="Protein MTSS 1">
    <location>
        <begin position="1"/>
        <end position="755"/>
    </location>
</feature>
<feature type="domain" description="IMD" evidence="4">
    <location>
        <begin position="1"/>
        <end position="250"/>
    </location>
</feature>
<feature type="domain" description="WH2" evidence="3">
    <location>
        <begin position="727"/>
        <end position="744"/>
    </location>
</feature>
<feature type="region of interest" description="Disordered" evidence="5">
    <location>
        <begin position="139"/>
        <end position="159"/>
    </location>
</feature>
<feature type="region of interest" description="Disordered" evidence="5">
    <location>
        <begin position="255"/>
        <end position="305"/>
    </location>
</feature>
<feature type="region of interest" description="Disordered" evidence="5">
    <location>
        <begin position="327"/>
        <end position="351"/>
    </location>
</feature>
<feature type="region of interest" description="Disordered" evidence="5">
    <location>
        <begin position="428"/>
        <end position="470"/>
    </location>
</feature>
<feature type="region of interest" description="Disordered" evidence="5">
    <location>
        <begin position="490"/>
        <end position="513"/>
    </location>
</feature>
<feature type="region of interest" description="Disordered" evidence="5">
    <location>
        <begin position="563"/>
        <end position="755"/>
    </location>
</feature>
<feature type="coiled-coil region" evidence="2">
    <location>
        <begin position="108"/>
        <end position="155"/>
    </location>
</feature>
<feature type="compositionally biased region" description="Low complexity" evidence="5">
    <location>
        <begin position="443"/>
        <end position="453"/>
    </location>
</feature>
<feature type="compositionally biased region" description="Low complexity" evidence="5">
    <location>
        <begin position="608"/>
        <end position="623"/>
    </location>
</feature>
<feature type="compositionally biased region" description="Polar residues" evidence="5">
    <location>
        <begin position="656"/>
        <end position="671"/>
    </location>
</feature>
<feature type="modified residue" description="Phosphothreonine" evidence="1">
    <location>
        <position position="258"/>
    </location>
</feature>
<feature type="modified residue" description="Phosphoserine" evidence="1">
    <location>
        <position position="261"/>
    </location>
</feature>
<feature type="modified residue" description="Phosphoserine" evidence="1">
    <location>
        <position position="262"/>
    </location>
</feature>
<feature type="modified residue" description="Phosphoserine" evidence="1">
    <location>
        <position position="271"/>
    </location>
</feature>
<feature type="modified residue" description="Phosphoserine" evidence="1">
    <location>
        <position position="322"/>
    </location>
</feature>
<feature type="modified residue" description="Phosphothreonine" evidence="1">
    <location>
        <position position="425"/>
    </location>
</feature>
<feature type="modified residue" description="Phosphothreonine" evidence="1">
    <location>
        <position position="603"/>
    </location>
</feature>
<feature type="modified residue" description="Phosphoserine" evidence="1">
    <location>
        <position position="644"/>
    </location>
</feature>
<feature type="modified residue" description="Phosphoserine" evidence="1">
    <location>
        <position position="647"/>
    </location>
</feature>
<feature type="splice variant" id="VSP_007420" description="In isoform 2." evidence="9">
    <location>
        <begin position="1"/>
        <end position="200"/>
    </location>
</feature>
<feature type="splice variant" id="VSP_054702" description="In isoform 4." evidence="8">
    <original>K</original>
    <variation>KVDTL</variation>
    <location>
        <position position="153"/>
    </location>
</feature>
<feature type="splice variant" id="VSP_007421" description="In isoform 2." evidence="9">
    <location>
        <begin position="345"/>
        <end position="426"/>
    </location>
</feature>
<feature type="splice variant" id="VSP_016216" description="In isoform 3." evidence="10">
    <original>LSNGFSHYSLSSESHVGPTGAGLFPHCLPASRLLPRVTSVHLPDYAHYYTIGPGMFPSSQIPSW</original>
    <variation>NSSSSASSEASETCQSVSECSSPTSVSSGSTMGAWVSTE</variation>
    <location>
        <begin position="346"/>
        <end position="409"/>
    </location>
</feature>
<feature type="sequence variant" id="VAR_054010" description="In dbSNP:rs2303956.">
    <original>N</original>
    <variation>I</variation>
    <location>
        <position position="305"/>
    </location>
</feature>
<feature type="sequence variant" id="VAR_054011" description="In dbSNP:rs3829037.">
    <original>T</original>
    <variation>A</variation>
    <location>
        <position position="725"/>
    </location>
</feature>
<feature type="sequence conflict" description="In Ref. 2; AK027015." evidence="11" ref="2">
    <original>V</original>
    <variation>A</variation>
    <location>
        <position position="586"/>
    </location>
</feature>
<feature type="sequence conflict" description="In Ref. 1; AAF15947." evidence="11" ref="1">
    <original>L</original>
    <variation>M</variation>
    <location>
        <position position="630"/>
    </location>
</feature>
<feature type="helix" evidence="13">
    <location>
        <begin position="729"/>
        <end position="737"/>
    </location>
</feature>
<protein>
    <recommendedName>
        <fullName evidence="11">Protein MTSS 1</fullName>
    </recommendedName>
    <alternativeName>
        <fullName>Metastasis suppressor YGL-1</fullName>
    </alternativeName>
    <alternativeName>
        <fullName>Metastasis suppressor protein 1</fullName>
    </alternativeName>
    <alternativeName>
        <fullName>Missing in metastasis protein</fullName>
    </alternativeName>
</protein>
<comment type="function">
    <text>May be related to cancer progression or tumor metastasis in a variety of organ sites, most likely through an interaction with the actin cytoskeleton.</text>
</comment>
<comment type="subunit">
    <text evidence="7">Binds to actin. Binds to the cytoplasmic domain of receptor protein tyrosine phosphatase delta.</text>
</comment>
<comment type="interaction">
    <interactant intactId="EBI-473954">
        <id>O43312</id>
    </interactant>
    <interactant intactId="EBI-466029">
        <id>P42858</id>
        <label>HTT</label>
    </interactant>
    <organismsDiffer>false</organismsDiffer>
    <experiments>3</experiments>
</comment>
<comment type="interaction">
    <interactant intactId="EBI-473954">
        <id>O43312</id>
    </interactant>
    <interactant intactId="EBI-473954">
        <id>O43312</id>
        <label>MTSS1</label>
    </interactant>
    <organismsDiffer>false</organismsDiffer>
    <experiments>2</experiments>
</comment>
<comment type="interaction">
    <interactant intactId="EBI-473954">
        <id>O43312</id>
    </interactant>
    <interactant intactId="EBI-397955">
        <id>Q60598</id>
        <label>Cttn</label>
    </interactant>
    <organismsDiffer>true</organismsDiffer>
    <experiments>2</experiments>
</comment>
<comment type="subcellular location">
    <subcellularLocation>
        <location>Cytoplasm</location>
        <location>Cytoskeleton</location>
    </subcellularLocation>
</comment>
<comment type="alternative products">
    <event type="alternative splicing"/>
    <isoform>
        <id>O43312-1</id>
        <name>1</name>
        <sequence type="displayed"/>
    </isoform>
    <isoform>
        <id>O43312-2</id>
        <name>2</name>
        <sequence type="described" ref="VSP_007420 VSP_007421"/>
    </isoform>
    <isoform>
        <id>O43312-4</id>
        <name>3</name>
        <sequence type="described" ref="VSP_016216"/>
    </isoform>
    <isoform>
        <id>O43312-5</id>
        <name>4</name>
        <sequence type="described" ref="VSP_054702"/>
    </isoform>
</comment>
<comment type="tissue specificity">
    <text evidence="6">Expressed in many tissues, including spleen, thymus, prostate, testis, uterus, colon, and peripheral blood.</text>
</comment>
<comment type="domain">
    <text>The WH2 motif at the C-terminus binds to actin monomers.</text>
</comment>
<comment type="similarity">
    <text evidence="11">Belongs to the MTSS family.</text>
</comment>
<reference key="1">
    <citation type="submission" date="1998-08" db="EMBL/GenBank/DDBJ databases">
        <title>Identification of potential metastasis suppressor gene (YGL-1) in bladder cancer.</title>
        <authorList>
            <person name="Lee Y.-G."/>
            <person name="Macoska J.A."/>
            <person name="Schwab E.D."/>
            <person name="Korenchuk S."/>
            <person name="Pienta K.J."/>
        </authorList>
    </citation>
    <scope>NUCLEOTIDE SEQUENCE [MRNA] (ISOFORM 1)</scope>
</reference>
<reference key="2">
    <citation type="journal article" date="2004" name="Nat. Genet.">
        <title>Complete sequencing and characterization of 21,243 full-length human cDNAs.</title>
        <authorList>
            <person name="Ota T."/>
            <person name="Suzuki Y."/>
            <person name="Nishikawa T."/>
            <person name="Otsuki T."/>
            <person name="Sugiyama T."/>
            <person name="Irie R."/>
            <person name="Wakamatsu A."/>
            <person name="Hayashi K."/>
            <person name="Sato H."/>
            <person name="Nagai K."/>
            <person name="Kimura K."/>
            <person name="Makita H."/>
            <person name="Sekine M."/>
            <person name="Obayashi M."/>
            <person name="Nishi T."/>
            <person name="Shibahara T."/>
            <person name="Tanaka T."/>
            <person name="Ishii S."/>
            <person name="Yamamoto J."/>
            <person name="Saito K."/>
            <person name="Kawai Y."/>
            <person name="Isono Y."/>
            <person name="Nakamura Y."/>
            <person name="Nagahari K."/>
            <person name="Murakami K."/>
            <person name="Yasuda T."/>
            <person name="Iwayanagi T."/>
            <person name="Wagatsuma M."/>
            <person name="Shiratori A."/>
            <person name="Sudo H."/>
            <person name="Hosoiri T."/>
            <person name="Kaku Y."/>
            <person name="Kodaira H."/>
            <person name="Kondo H."/>
            <person name="Sugawara M."/>
            <person name="Takahashi M."/>
            <person name="Kanda K."/>
            <person name="Yokoi T."/>
            <person name="Furuya T."/>
            <person name="Kikkawa E."/>
            <person name="Omura Y."/>
            <person name="Abe K."/>
            <person name="Kamihara K."/>
            <person name="Katsuta N."/>
            <person name="Sato K."/>
            <person name="Tanikawa M."/>
            <person name="Yamazaki M."/>
            <person name="Ninomiya K."/>
            <person name="Ishibashi T."/>
            <person name="Yamashita H."/>
            <person name="Murakawa K."/>
            <person name="Fujimori K."/>
            <person name="Tanai H."/>
            <person name="Kimata M."/>
            <person name="Watanabe M."/>
            <person name="Hiraoka S."/>
            <person name="Chiba Y."/>
            <person name="Ishida S."/>
            <person name="Ono Y."/>
            <person name="Takiguchi S."/>
            <person name="Watanabe S."/>
            <person name="Yosida M."/>
            <person name="Hotuta T."/>
            <person name="Kusano J."/>
            <person name="Kanehori K."/>
            <person name="Takahashi-Fujii A."/>
            <person name="Hara H."/>
            <person name="Tanase T.-O."/>
            <person name="Nomura Y."/>
            <person name="Togiya S."/>
            <person name="Komai F."/>
            <person name="Hara R."/>
            <person name="Takeuchi K."/>
            <person name="Arita M."/>
            <person name="Imose N."/>
            <person name="Musashino K."/>
            <person name="Yuuki H."/>
            <person name="Oshima A."/>
            <person name="Sasaki N."/>
            <person name="Aotsuka S."/>
            <person name="Yoshikawa Y."/>
            <person name="Matsunawa H."/>
            <person name="Ichihara T."/>
            <person name="Shiohata N."/>
            <person name="Sano S."/>
            <person name="Moriya S."/>
            <person name="Momiyama H."/>
            <person name="Satoh N."/>
            <person name="Takami S."/>
            <person name="Terashima Y."/>
            <person name="Suzuki O."/>
            <person name="Nakagawa S."/>
            <person name="Senoh A."/>
            <person name="Mizoguchi H."/>
            <person name="Goto Y."/>
            <person name="Shimizu F."/>
            <person name="Wakebe H."/>
            <person name="Hishigaki H."/>
            <person name="Watanabe T."/>
            <person name="Sugiyama A."/>
            <person name="Takemoto M."/>
            <person name="Kawakami B."/>
            <person name="Yamazaki M."/>
            <person name="Watanabe K."/>
            <person name="Kumagai A."/>
            <person name="Itakura S."/>
            <person name="Fukuzumi Y."/>
            <person name="Fujimori Y."/>
            <person name="Komiyama M."/>
            <person name="Tashiro H."/>
            <person name="Tanigami A."/>
            <person name="Fujiwara T."/>
            <person name="Ono T."/>
            <person name="Yamada K."/>
            <person name="Fujii Y."/>
            <person name="Ozaki K."/>
            <person name="Hirao M."/>
            <person name="Ohmori Y."/>
            <person name="Kawabata A."/>
            <person name="Hikiji T."/>
            <person name="Kobatake N."/>
            <person name="Inagaki H."/>
            <person name="Ikema Y."/>
            <person name="Okamoto S."/>
            <person name="Okitani R."/>
            <person name="Kawakami T."/>
            <person name="Noguchi S."/>
            <person name="Itoh T."/>
            <person name="Shigeta K."/>
            <person name="Senba T."/>
            <person name="Matsumura K."/>
            <person name="Nakajima Y."/>
            <person name="Mizuno T."/>
            <person name="Morinaga M."/>
            <person name="Sasaki M."/>
            <person name="Togashi T."/>
            <person name="Oyama M."/>
            <person name="Hata H."/>
            <person name="Watanabe M."/>
            <person name="Komatsu T."/>
            <person name="Mizushima-Sugano J."/>
            <person name="Satoh T."/>
            <person name="Shirai Y."/>
            <person name="Takahashi Y."/>
            <person name="Nakagawa K."/>
            <person name="Okumura K."/>
            <person name="Nagase T."/>
            <person name="Nomura N."/>
            <person name="Kikuchi H."/>
            <person name="Masuho Y."/>
            <person name="Yamashita R."/>
            <person name="Nakai K."/>
            <person name="Yada T."/>
            <person name="Nakamura Y."/>
            <person name="Ohara O."/>
            <person name="Isogai T."/>
            <person name="Sugano S."/>
        </authorList>
    </citation>
    <scope>NUCLEOTIDE SEQUENCE [LARGE SCALE MRNA] (ISOFORM 4)</scope>
</reference>
<reference key="3">
    <citation type="journal article" date="2006" name="Nature">
        <title>DNA sequence and analysis of human chromosome 8.</title>
        <authorList>
            <person name="Nusbaum C."/>
            <person name="Mikkelsen T.S."/>
            <person name="Zody M.C."/>
            <person name="Asakawa S."/>
            <person name="Taudien S."/>
            <person name="Garber M."/>
            <person name="Kodira C.D."/>
            <person name="Schueler M.G."/>
            <person name="Shimizu A."/>
            <person name="Whittaker C.A."/>
            <person name="Chang J.L."/>
            <person name="Cuomo C.A."/>
            <person name="Dewar K."/>
            <person name="FitzGerald M.G."/>
            <person name="Yang X."/>
            <person name="Allen N.R."/>
            <person name="Anderson S."/>
            <person name="Asakawa T."/>
            <person name="Blechschmidt K."/>
            <person name="Bloom T."/>
            <person name="Borowsky M.L."/>
            <person name="Butler J."/>
            <person name="Cook A."/>
            <person name="Corum B."/>
            <person name="DeArellano K."/>
            <person name="DeCaprio D."/>
            <person name="Dooley K.T."/>
            <person name="Dorris L. III"/>
            <person name="Engels R."/>
            <person name="Gloeckner G."/>
            <person name="Hafez N."/>
            <person name="Hagopian D.S."/>
            <person name="Hall J.L."/>
            <person name="Ishikawa S.K."/>
            <person name="Jaffe D.B."/>
            <person name="Kamat A."/>
            <person name="Kudoh J."/>
            <person name="Lehmann R."/>
            <person name="Lokitsang T."/>
            <person name="Macdonald P."/>
            <person name="Major J.E."/>
            <person name="Matthews C.D."/>
            <person name="Mauceli E."/>
            <person name="Menzel U."/>
            <person name="Mihalev A.H."/>
            <person name="Minoshima S."/>
            <person name="Murayama Y."/>
            <person name="Naylor J.W."/>
            <person name="Nicol R."/>
            <person name="Nguyen C."/>
            <person name="O'Leary S.B."/>
            <person name="O'Neill K."/>
            <person name="Parker S.C.J."/>
            <person name="Polley A."/>
            <person name="Raymond C.K."/>
            <person name="Reichwald K."/>
            <person name="Rodriguez J."/>
            <person name="Sasaki T."/>
            <person name="Schilhabel M."/>
            <person name="Siddiqui R."/>
            <person name="Smith C.L."/>
            <person name="Sneddon T.P."/>
            <person name="Talamas J.A."/>
            <person name="Tenzin P."/>
            <person name="Topham K."/>
            <person name="Venkataraman V."/>
            <person name="Wen G."/>
            <person name="Yamazaki S."/>
            <person name="Young S.K."/>
            <person name="Zeng Q."/>
            <person name="Zimmer A.R."/>
            <person name="Rosenthal A."/>
            <person name="Birren B.W."/>
            <person name="Platzer M."/>
            <person name="Shimizu N."/>
            <person name="Lander E.S."/>
        </authorList>
    </citation>
    <scope>NUCLEOTIDE SEQUENCE [LARGE SCALE GENOMIC DNA]</scope>
</reference>
<reference key="4">
    <citation type="journal article" date="2004" name="Genome Res.">
        <title>The status, quality, and expansion of the NIH full-length cDNA project: the Mammalian Gene Collection (MGC).</title>
        <authorList>
            <consortium name="The MGC Project Team"/>
        </authorList>
    </citation>
    <scope>NUCLEOTIDE SEQUENCE [LARGE SCALE MRNA] (ISOFORM 2)</scope>
    <source>
        <tissue>Testis</tissue>
    </source>
</reference>
<reference key="5">
    <citation type="journal article" date="1997" name="DNA Res.">
        <title>Prediction of the coding sequences of unidentified human genes. VIII. 78 new cDNA clones from brain which code for large proteins in vitro.</title>
        <authorList>
            <person name="Ishikawa K."/>
            <person name="Nagase T."/>
            <person name="Nakajima D."/>
            <person name="Seki N."/>
            <person name="Ohira M."/>
            <person name="Miyajima N."/>
            <person name="Tanaka A."/>
            <person name="Kotani H."/>
            <person name="Nomura N."/>
            <person name="Ohara O."/>
        </authorList>
    </citation>
    <scope>NUCLEOTIDE SEQUENCE [LARGE SCALE MRNA] OF 65-755 (ISOFORM 3)</scope>
    <source>
        <tissue>Brain</tissue>
    </source>
</reference>
<reference key="6">
    <citation type="journal article" date="2002" name="Neoplasia">
        <title>MIM, a potential metastasis suppressor gene in bladder cancer.</title>
        <authorList>
            <person name="Lee Y.-G."/>
            <person name="Macoska J.A."/>
            <person name="Korenchuk S."/>
            <person name="Pienta K.J."/>
        </authorList>
    </citation>
    <scope>NUCLEOTIDE SEQUENCE [MRNA] OF 400-755 (ISOFORM 1)</scope>
    <scope>TISSUE SPECIFICITY</scope>
</reference>
<reference key="7">
    <citation type="journal article" date="2003" name="Biochem. J.">
        <title>MIM-B, a putative metastasis suppressor protein, binds to actin and to protein tyrosine phosphatase delta.</title>
        <authorList>
            <person name="Woodings J.A."/>
            <person name="Sharp S.J."/>
            <person name="Machesky L.M."/>
        </authorList>
    </citation>
    <scope>INTERACTION OF WH2 DOMAIN WITH ACTIN</scope>
    <scope>SUBUNIT</scope>
</reference>
<reference key="8">
    <citation type="journal article" date="2008" name="J. Proteome Res.">
        <title>Phosphoproteome of resting human platelets.</title>
        <authorList>
            <person name="Zahedi R.P."/>
            <person name="Lewandrowski U."/>
            <person name="Wiesner J."/>
            <person name="Wortelkamp S."/>
            <person name="Moebius J."/>
            <person name="Schuetz C."/>
            <person name="Walter U."/>
            <person name="Gambaryan S."/>
            <person name="Sickmann A."/>
        </authorList>
    </citation>
    <scope>IDENTIFICATION BY MASS SPECTROMETRY [LARGE SCALE ANALYSIS]</scope>
    <source>
        <tissue>Platelet</tissue>
    </source>
</reference>
<evidence type="ECO:0000250" key="1">
    <source>
        <dbReference type="UniProtKB" id="Q8R1S4"/>
    </source>
</evidence>
<evidence type="ECO:0000255" key="2"/>
<evidence type="ECO:0000255" key="3">
    <source>
        <dbReference type="PROSITE-ProRule" id="PRU00406"/>
    </source>
</evidence>
<evidence type="ECO:0000255" key="4">
    <source>
        <dbReference type="PROSITE-ProRule" id="PRU00668"/>
    </source>
</evidence>
<evidence type="ECO:0000256" key="5">
    <source>
        <dbReference type="SAM" id="MobiDB-lite"/>
    </source>
</evidence>
<evidence type="ECO:0000269" key="6">
    <source>
    </source>
</evidence>
<evidence type="ECO:0000269" key="7">
    <source>
    </source>
</evidence>
<evidence type="ECO:0000303" key="8">
    <source>
    </source>
</evidence>
<evidence type="ECO:0000303" key="9">
    <source>
    </source>
</evidence>
<evidence type="ECO:0000303" key="10">
    <source>
    </source>
</evidence>
<evidence type="ECO:0000305" key="11"/>
<evidence type="ECO:0000312" key="12">
    <source>
        <dbReference type="HGNC" id="HGNC:20443"/>
    </source>
</evidence>
<evidence type="ECO:0007829" key="13">
    <source>
        <dbReference type="PDB" id="2D1K"/>
    </source>
</evidence>
<sequence length="755" mass="82251">MEAVIEKECSALGGLFQTIISDMKGSYPVWEDFINKAGKLQSQLRTTVVAAAAFLDAFQKVADMATNTRGGTREIGSALTRMCMRHRSIEAKLRQFSSALIDCLINPLQEQMEEWKKVANQLDKDHAKEYKKARQEIKKKSSDTLKLQKKAKKGRGDIQPQLDSALQDVNDKYLLLEETEKQAVRKALIEERGRFCTFISMLRPVIEEEISMLGEITHLQTISEDLKSLTMDPHKLPSSSEQVILDLKGSDYSWSYQTPPSSPSTTMSRKSSVCSSLNSVNSSDSRSSGSHSHSPSSHYRYRSSNLAQQAPVRLSSVSSHDSGFISQDAFQSKSPSPMPPEAPNQLSNGFSHYSLSSESHVGPTGAGLFPHCLPASRLLPRVTSVHLPDYAHYYTIGPGMFPSSQIPSWKDWAKPGPYDQPLVNTLQRRKEKREPDPNGGGPTTASGPPAAAEEAQRPRSMTVSAATRPGEEMEACEELALALSRGLQLDTQRSSRDSLQCSSGYSTQTTTPCCSEDTIPSQVSDYDYFSVSGDQEADQQEFDKSSTIPRNSDISQSYRRMFQAKRPASTAGLPTTLGPAMVTPGVATIRRTPSTKPSVRRGTIGAGPIPIKTPVIPVKTPTVPDLPGVLPAPPDGPEERGEHSPESPSVGEGPQGVTSMPSSMWSGQASVNPPLPGPKPSIPEEHRQAIPESEAEDQEREPPSATVSPGQIPESDPADLSPRDTPQGEDMLNAIRRGVKLKKTTTNDRSAPRFS</sequence>
<gene>
    <name evidence="12" type="primary">MTSS1</name>
    <name type="synonym">KIAA0429</name>
    <name type="synonym">MIM</name>
</gene>
<proteinExistence type="evidence at protein level"/>